<comment type="function">
    <text evidence="1">Involved in nuclear export, actin cytoskeleton organization and vesicular transport.</text>
</comment>
<comment type="subcellular location">
    <subcellularLocation>
        <location evidence="2">Cytoplasm</location>
    </subcellularLocation>
    <subcellularLocation>
        <location evidence="2">Nucleus</location>
    </subcellularLocation>
</comment>
<comment type="similarity">
    <text evidence="4">Belongs to the BCP1 family.</text>
</comment>
<organism>
    <name type="scientific">Gibberella zeae (strain ATCC MYA-4620 / CBS 123657 / FGSC 9075 / NRRL 31084 / PH-1)</name>
    <name type="common">Wheat head blight fungus</name>
    <name type="synonym">Fusarium graminearum</name>
    <dbReference type="NCBI Taxonomy" id="229533"/>
    <lineage>
        <taxon>Eukaryota</taxon>
        <taxon>Fungi</taxon>
        <taxon>Dikarya</taxon>
        <taxon>Ascomycota</taxon>
        <taxon>Pezizomycotina</taxon>
        <taxon>Sordariomycetes</taxon>
        <taxon>Hypocreomycetidae</taxon>
        <taxon>Hypocreales</taxon>
        <taxon>Nectriaceae</taxon>
        <taxon>Fusarium</taxon>
    </lineage>
</organism>
<keyword id="KW-0963">Cytoplasm</keyword>
<keyword id="KW-0539">Nucleus</keyword>
<keyword id="KW-0653">Protein transport</keyword>
<keyword id="KW-1185">Reference proteome</keyword>
<keyword id="KW-0813">Transport</keyword>
<dbReference type="EMBL" id="DS231668">
    <property type="protein sequence ID" value="ESU16207.1"/>
    <property type="molecule type" value="Genomic_DNA"/>
</dbReference>
<dbReference type="EMBL" id="HG970335">
    <property type="protein sequence ID" value="CEF84847.1"/>
    <property type="molecule type" value="Genomic_DNA"/>
</dbReference>
<dbReference type="RefSeq" id="XP_011328109.1">
    <property type="nucleotide sequence ID" value="XM_011329807.1"/>
</dbReference>
<dbReference type="SMR" id="Q4HZK7"/>
<dbReference type="FunCoup" id="Q4HZK7">
    <property type="interactions" value="1015"/>
</dbReference>
<dbReference type="STRING" id="229533.Q4HZK7"/>
<dbReference type="GeneID" id="23556548"/>
<dbReference type="KEGG" id="fgr:FGSG_09601"/>
<dbReference type="VEuPathDB" id="FungiDB:FGRAMPH1_01G26703"/>
<dbReference type="eggNOG" id="KOG3034">
    <property type="taxonomic scope" value="Eukaryota"/>
</dbReference>
<dbReference type="HOGENOM" id="CLU_068770_2_0_1"/>
<dbReference type="InParanoid" id="Q4HZK7"/>
<dbReference type="OrthoDB" id="113528at110618"/>
<dbReference type="Proteomes" id="UP000070720">
    <property type="component" value="Chromosome 4"/>
</dbReference>
<dbReference type="GO" id="GO:0005737">
    <property type="term" value="C:cytoplasm"/>
    <property type="evidence" value="ECO:0007669"/>
    <property type="project" value="UniProtKB-SubCell"/>
</dbReference>
<dbReference type="GO" id="GO:0005634">
    <property type="term" value="C:nucleus"/>
    <property type="evidence" value="ECO:0007669"/>
    <property type="project" value="UniProtKB-SubCell"/>
</dbReference>
<dbReference type="GO" id="GO:0015031">
    <property type="term" value="P:protein transport"/>
    <property type="evidence" value="ECO:0007669"/>
    <property type="project" value="UniProtKB-KW"/>
</dbReference>
<dbReference type="InterPro" id="IPR025602">
    <property type="entry name" value="BCP1_family"/>
</dbReference>
<dbReference type="PANTHER" id="PTHR13261">
    <property type="entry name" value="BRCA2 AND CDKN1A INTERACTING PROTEIN"/>
    <property type="match status" value="1"/>
</dbReference>
<dbReference type="PANTHER" id="PTHR13261:SF0">
    <property type="entry name" value="BRCA2 AND CDKN1A-INTERACTING PROTEIN"/>
    <property type="match status" value="1"/>
</dbReference>
<dbReference type="Pfam" id="PF13862">
    <property type="entry name" value="BCCIP"/>
    <property type="match status" value="1"/>
</dbReference>
<dbReference type="PIRSF" id="PIRSF028983">
    <property type="entry name" value="BCP1"/>
    <property type="match status" value="1"/>
</dbReference>
<feature type="chain" id="PRO_0000249703" description="Protein BCP1">
    <location>
        <begin position="1"/>
        <end position="285"/>
    </location>
</feature>
<feature type="region of interest" description="Disordered" evidence="3">
    <location>
        <begin position="1"/>
        <end position="25"/>
    </location>
</feature>
<feature type="compositionally biased region" description="Basic and acidic residues" evidence="3">
    <location>
        <begin position="1"/>
        <end position="14"/>
    </location>
</feature>
<protein>
    <recommendedName>
        <fullName>Protein BCP1</fullName>
    </recommendedName>
</protein>
<reference key="1">
    <citation type="journal article" date="2007" name="Science">
        <title>The Fusarium graminearum genome reveals a link between localized polymorphism and pathogen specialization.</title>
        <authorList>
            <person name="Cuomo C.A."/>
            <person name="Gueldener U."/>
            <person name="Xu J.-R."/>
            <person name="Trail F."/>
            <person name="Turgeon B.G."/>
            <person name="Di Pietro A."/>
            <person name="Walton J.D."/>
            <person name="Ma L.-J."/>
            <person name="Baker S.E."/>
            <person name="Rep M."/>
            <person name="Adam G."/>
            <person name="Antoniw J."/>
            <person name="Baldwin T."/>
            <person name="Calvo S.E."/>
            <person name="Chang Y.-L."/>
            <person name="DeCaprio D."/>
            <person name="Gale L.R."/>
            <person name="Gnerre S."/>
            <person name="Goswami R.S."/>
            <person name="Hammond-Kosack K."/>
            <person name="Harris L.J."/>
            <person name="Hilburn K."/>
            <person name="Kennell J.C."/>
            <person name="Kroken S."/>
            <person name="Magnuson J.K."/>
            <person name="Mannhaupt G."/>
            <person name="Mauceli E.W."/>
            <person name="Mewes H.-W."/>
            <person name="Mitterbauer R."/>
            <person name="Muehlbauer G."/>
            <person name="Muensterkoetter M."/>
            <person name="Nelson D."/>
            <person name="O'Donnell K."/>
            <person name="Ouellet T."/>
            <person name="Qi W."/>
            <person name="Quesneville H."/>
            <person name="Roncero M.I.G."/>
            <person name="Seong K.-Y."/>
            <person name="Tetko I.V."/>
            <person name="Urban M."/>
            <person name="Waalwijk C."/>
            <person name="Ward T.J."/>
            <person name="Yao J."/>
            <person name="Birren B.W."/>
            <person name="Kistler H.C."/>
        </authorList>
    </citation>
    <scope>NUCLEOTIDE SEQUENCE [LARGE SCALE GENOMIC DNA]</scope>
    <source>
        <strain>ATCC MYA-4620 / CBS 123657 / FGSC 9075 / NRRL 31084 / PH-1</strain>
    </source>
</reference>
<reference key="2">
    <citation type="journal article" date="2010" name="Nature">
        <title>Comparative genomics reveals mobile pathogenicity chromosomes in Fusarium.</title>
        <authorList>
            <person name="Ma L.-J."/>
            <person name="van der Does H.C."/>
            <person name="Borkovich K.A."/>
            <person name="Coleman J.J."/>
            <person name="Daboussi M.-J."/>
            <person name="Di Pietro A."/>
            <person name="Dufresne M."/>
            <person name="Freitag M."/>
            <person name="Grabherr M."/>
            <person name="Henrissat B."/>
            <person name="Houterman P.M."/>
            <person name="Kang S."/>
            <person name="Shim W.-B."/>
            <person name="Woloshuk C."/>
            <person name="Xie X."/>
            <person name="Xu J.-R."/>
            <person name="Antoniw J."/>
            <person name="Baker S.E."/>
            <person name="Bluhm B.H."/>
            <person name="Breakspear A."/>
            <person name="Brown D.W."/>
            <person name="Butchko R.A.E."/>
            <person name="Chapman S."/>
            <person name="Coulson R."/>
            <person name="Coutinho P.M."/>
            <person name="Danchin E.G.J."/>
            <person name="Diener A."/>
            <person name="Gale L.R."/>
            <person name="Gardiner D.M."/>
            <person name="Goff S."/>
            <person name="Hammond-Kosack K.E."/>
            <person name="Hilburn K."/>
            <person name="Hua-Van A."/>
            <person name="Jonkers W."/>
            <person name="Kazan K."/>
            <person name="Kodira C.D."/>
            <person name="Koehrsen M."/>
            <person name="Kumar L."/>
            <person name="Lee Y.-H."/>
            <person name="Li L."/>
            <person name="Manners J.M."/>
            <person name="Miranda-Saavedra D."/>
            <person name="Mukherjee M."/>
            <person name="Park G."/>
            <person name="Park J."/>
            <person name="Park S.-Y."/>
            <person name="Proctor R.H."/>
            <person name="Regev A."/>
            <person name="Ruiz-Roldan M.C."/>
            <person name="Sain D."/>
            <person name="Sakthikumar S."/>
            <person name="Sykes S."/>
            <person name="Schwartz D.C."/>
            <person name="Turgeon B.G."/>
            <person name="Wapinski I."/>
            <person name="Yoder O."/>
            <person name="Young S."/>
            <person name="Zeng Q."/>
            <person name="Zhou S."/>
            <person name="Galagan J."/>
            <person name="Cuomo C.A."/>
            <person name="Kistler H.C."/>
            <person name="Rep M."/>
        </authorList>
    </citation>
    <scope>GENOME REANNOTATION</scope>
    <source>
        <strain>ATCC MYA-4620 / CBS 123657 / FGSC 9075 / NRRL 31084 / PH-1</strain>
    </source>
</reference>
<reference key="3">
    <citation type="journal article" date="2015" name="BMC Genomics">
        <title>The completed genome sequence of the pathogenic ascomycete fungus Fusarium graminearum.</title>
        <authorList>
            <person name="King R."/>
            <person name="Urban M."/>
            <person name="Hammond-Kosack M.C.U."/>
            <person name="Hassani-Pak K."/>
            <person name="Hammond-Kosack K.E."/>
        </authorList>
    </citation>
    <scope>NUCLEOTIDE SEQUENCE [LARGE SCALE GENOMIC DNA]</scope>
    <source>
        <strain>ATCC MYA-4620 / CBS 123657 / FGSC 9075 / NRRL 31084 / PH-1</strain>
    </source>
</reference>
<sequence>MGKKRAREEVKDVPPTDVNMMDEDGSDDEDFDMVNVDFEWFNFDPEVDFHGTKTLLRQLFDVDANLFNMSALADLVLSQPTIGSTIKVDGKANDAYALLTVLNTAVHQDKEPMKDIIKYLVEKAQTNSSLAPIADVLSSGKHVGLVFSERLINMPSELAPPLYSMLVDEVEAAVEDKEPYNFSHYLILSKTYQELESKLDVENQKRKKAKEEAGMYYFHMEDEVLHKHAVAHGNFNYTKEDELAADSKRAFQEMGVKAHGHMILIEASKFPGAVKSVNEYLSAAQ</sequence>
<name>BCP1_GIBZE</name>
<gene>
    <name type="primary">BCP1</name>
    <name type="ORF">FGRRES_09601</name>
    <name type="ORF">FGSG_09601</name>
</gene>
<evidence type="ECO:0000250" key="1"/>
<evidence type="ECO:0000250" key="2">
    <source>
        <dbReference type="UniProtKB" id="Q06338"/>
    </source>
</evidence>
<evidence type="ECO:0000256" key="3">
    <source>
        <dbReference type="SAM" id="MobiDB-lite"/>
    </source>
</evidence>
<evidence type="ECO:0000305" key="4"/>
<accession>Q4HZK7</accession>
<accession>A0A0E0SEI4</accession>
<accession>V6RQF7</accession>
<proteinExistence type="inferred from homology"/>